<reference key="1">
    <citation type="journal article" date="2001" name="Proc. Natl. Acad. Sci. U.S.A.">
        <title>Complete genome sequence of Caulobacter crescentus.</title>
        <authorList>
            <person name="Nierman W.C."/>
            <person name="Feldblyum T.V."/>
            <person name="Laub M.T."/>
            <person name="Paulsen I.T."/>
            <person name="Nelson K.E."/>
            <person name="Eisen J.A."/>
            <person name="Heidelberg J.F."/>
            <person name="Alley M.R.K."/>
            <person name="Ohta N."/>
            <person name="Maddock J.R."/>
            <person name="Potocka I."/>
            <person name="Nelson W.C."/>
            <person name="Newton A."/>
            <person name="Stephens C."/>
            <person name="Phadke N.D."/>
            <person name="Ely B."/>
            <person name="DeBoy R.T."/>
            <person name="Dodson R.J."/>
            <person name="Durkin A.S."/>
            <person name="Gwinn M.L."/>
            <person name="Haft D.H."/>
            <person name="Kolonay J.F."/>
            <person name="Smit J."/>
            <person name="Craven M.B."/>
            <person name="Khouri H.M."/>
            <person name="Shetty J."/>
            <person name="Berry K.J."/>
            <person name="Utterback T.R."/>
            <person name="Tran K."/>
            <person name="Wolf A.M."/>
            <person name="Vamathevan J.J."/>
            <person name="Ermolaeva M.D."/>
            <person name="White O."/>
            <person name="Salzberg S.L."/>
            <person name="Venter J.C."/>
            <person name="Shapiro L."/>
            <person name="Fraser C.M."/>
        </authorList>
    </citation>
    <scope>NUCLEOTIDE SEQUENCE [LARGE SCALE GENOMIC DNA]</scope>
    <source>
        <strain>ATCC 19089 / CIP 103742 / CB 15</strain>
    </source>
</reference>
<accession>Q9A5K4</accession>
<sequence length="332" mass="35510">MTASAHDPAREAIETIRARVFAFPKRHFLSAGDLNAPQAADLLDLADAFVALNRQTSKTLDILKGRTLMNLFFENSTRTQSSFELAGKRLGADVVNMNPKTSSVAKGETLIDTAVTLNAMRPDLLVVRHASSGAASLLSQKVSGHVVNAGDGQHEHPTQALLDALSIRRAFGRVSGLTVAICGDVLHSRVARSNVALLHTLGASVRLVGPPTLMPAQAERWGVAVHHDMKSGLAGADVVMMLRLQLERMQGAFVPSTREYFRFYGLDREKLSRAAPGAKVMHPGPMNRGVEIDSDVADDPAVSLIQDQVEMGVAARMAVLASLAARIEGAGR</sequence>
<organism>
    <name type="scientific">Caulobacter vibrioides (strain ATCC 19089 / CIP 103742 / CB 15)</name>
    <name type="common">Caulobacter crescentus</name>
    <dbReference type="NCBI Taxonomy" id="190650"/>
    <lineage>
        <taxon>Bacteria</taxon>
        <taxon>Pseudomonadati</taxon>
        <taxon>Pseudomonadota</taxon>
        <taxon>Alphaproteobacteria</taxon>
        <taxon>Caulobacterales</taxon>
        <taxon>Caulobacteraceae</taxon>
        <taxon>Caulobacter</taxon>
    </lineage>
</organism>
<comment type="function">
    <text evidence="1">Catalyzes the condensation of carbamoyl phosphate and aspartate to form carbamoyl aspartate and inorganic phosphate, the committed step in the de novo pyrimidine nucleotide biosynthesis pathway.</text>
</comment>
<comment type="catalytic activity">
    <reaction evidence="1">
        <text>carbamoyl phosphate + L-aspartate = N-carbamoyl-L-aspartate + phosphate + H(+)</text>
        <dbReference type="Rhea" id="RHEA:20013"/>
        <dbReference type="ChEBI" id="CHEBI:15378"/>
        <dbReference type="ChEBI" id="CHEBI:29991"/>
        <dbReference type="ChEBI" id="CHEBI:32814"/>
        <dbReference type="ChEBI" id="CHEBI:43474"/>
        <dbReference type="ChEBI" id="CHEBI:58228"/>
        <dbReference type="EC" id="2.1.3.2"/>
    </reaction>
</comment>
<comment type="pathway">
    <text evidence="1">Pyrimidine metabolism; UMP biosynthesis via de novo pathway; (S)-dihydroorotate from bicarbonate: step 2/3.</text>
</comment>
<comment type="subunit">
    <text evidence="1">Heterododecamer (2C3:3R2) of six catalytic PyrB chains organized as two trimers (C3), and six regulatory PyrI chains organized as three dimers (R2).</text>
</comment>
<comment type="similarity">
    <text evidence="1">Belongs to the aspartate/ornithine carbamoyltransferase superfamily. ATCase family.</text>
</comment>
<protein>
    <recommendedName>
        <fullName evidence="1">Aspartate carbamoyltransferase catalytic subunit</fullName>
        <ecNumber evidence="1">2.1.3.2</ecNumber>
    </recommendedName>
    <alternativeName>
        <fullName evidence="1">Aspartate transcarbamylase</fullName>
        <shortName evidence="1">ATCase</shortName>
    </alternativeName>
</protein>
<proteinExistence type="inferred from homology"/>
<dbReference type="EC" id="2.1.3.2" evidence="1"/>
<dbReference type="EMBL" id="AE005673">
    <property type="protein sequence ID" value="AAK24414.1"/>
    <property type="molecule type" value="Genomic_DNA"/>
</dbReference>
<dbReference type="PIR" id="B87552">
    <property type="entry name" value="B87552"/>
</dbReference>
<dbReference type="RefSeq" id="NP_421246.1">
    <property type="nucleotide sequence ID" value="NC_002696.2"/>
</dbReference>
<dbReference type="RefSeq" id="WP_010920301.1">
    <property type="nucleotide sequence ID" value="NC_002696.2"/>
</dbReference>
<dbReference type="SMR" id="Q9A5K4"/>
<dbReference type="STRING" id="190650.CC_2443"/>
<dbReference type="EnsemblBacteria" id="AAK24414">
    <property type="protein sequence ID" value="AAK24414"/>
    <property type="gene ID" value="CC_2443"/>
</dbReference>
<dbReference type="KEGG" id="ccr:CC_2443"/>
<dbReference type="PATRIC" id="fig|190650.5.peg.2460"/>
<dbReference type="eggNOG" id="COG0540">
    <property type="taxonomic scope" value="Bacteria"/>
</dbReference>
<dbReference type="HOGENOM" id="CLU_043846_2_0_5"/>
<dbReference type="BioCyc" id="CAULO:CC2443-MONOMER"/>
<dbReference type="UniPathway" id="UPA00070">
    <property type="reaction ID" value="UER00116"/>
</dbReference>
<dbReference type="Proteomes" id="UP000001816">
    <property type="component" value="Chromosome"/>
</dbReference>
<dbReference type="GO" id="GO:0005829">
    <property type="term" value="C:cytosol"/>
    <property type="evidence" value="ECO:0007669"/>
    <property type="project" value="TreeGrafter"/>
</dbReference>
<dbReference type="GO" id="GO:0016597">
    <property type="term" value="F:amino acid binding"/>
    <property type="evidence" value="ECO:0007669"/>
    <property type="project" value="InterPro"/>
</dbReference>
<dbReference type="GO" id="GO:0004070">
    <property type="term" value="F:aspartate carbamoyltransferase activity"/>
    <property type="evidence" value="ECO:0007669"/>
    <property type="project" value="UniProtKB-UniRule"/>
</dbReference>
<dbReference type="GO" id="GO:0006207">
    <property type="term" value="P:'de novo' pyrimidine nucleobase biosynthetic process"/>
    <property type="evidence" value="ECO:0007669"/>
    <property type="project" value="InterPro"/>
</dbReference>
<dbReference type="GO" id="GO:0044205">
    <property type="term" value="P:'de novo' UMP biosynthetic process"/>
    <property type="evidence" value="ECO:0007669"/>
    <property type="project" value="UniProtKB-UniRule"/>
</dbReference>
<dbReference type="GO" id="GO:0006520">
    <property type="term" value="P:amino acid metabolic process"/>
    <property type="evidence" value="ECO:0007669"/>
    <property type="project" value="InterPro"/>
</dbReference>
<dbReference type="FunFam" id="3.40.50.1370:FF:000007">
    <property type="entry name" value="Aspartate carbamoyltransferase"/>
    <property type="match status" value="1"/>
</dbReference>
<dbReference type="Gene3D" id="3.40.50.1370">
    <property type="entry name" value="Aspartate/ornithine carbamoyltransferase"/>
    <property type="match status" value="2"/>
</dbReference>
<dbReference type="HAMAP" id="MF_00001">
    <property type="entry name" value="Asp_carb_tr"/>
    <property type="match status" value="1"/>
</dbReference>
<dbReference type="InterPro" id="IPR006132">
    <property type="entry name" value="Asp/Orn_carbamoyltranf_P-bd"/>
</dbReference>
<dbReference type="InterPro" id="IPR006130">
    <property type="entry name" value="Asp/Orn_carbamoylTrfase"/>
</dbReference>
<dbReference type="InterPro" id="IPR036901">
    <property type="entry name" value="Asp/Orn_carbamoylTrfase_sf"/>
</dbReference>
<dbReference type="InterPro" id="IPR002082">
    <property type="entry name" value="Asp_carbamoyltransf"/>
</dbReference>
<dbReference type="InterPro" id="IPR006131">
    <property type="entry name" value="Asp_carbamoyltransf_Asp/Orn-bd"/>
</dbReference>
<dbReference type="NCBIfam" id="TIGR00670">
    <property type="entry name" value="asp_carb_tr"/>
    <property type="match status" value="1"/>
</dbReference>
<dbReference type="NCBIfam" id="NF002032">
    <property type="entry name" value="PRK00856.1"/>
    <property type="match status" value="1"/>
</dbReference>
<dbReference type="PANTHER" id="PTHR45753:SF6">
    <property type="entry name" value="ASPARTATE CARBAMOYLTRANSFERASE"/>
    <property type="match status" value="1"/>
</dbReference>
<dbReference type="PANTHER" id="PTHR45753">
    <property type="entry name" value="ORNITHINE CARBAMOYLTRANSFERASE, MITOCHONDRIAL"/>
    <property type="match status" value="1"/>
</dbReference>
<dbReference type="Pfam" id="PF00185">
    <property type="entry name" value="OTCace"/>
    <property type="match status" value="1"/>
</dbReference>
<dbReference type="Pfam" id="PF02729">
    <property type="entry name" value="OTCace_N"/>
    <property type="match status" value="1"/>
</dbReference>
<dbReference type="PRINTS" id="PR00100">
    <property type="entry name" value="AOTCASE"/>
</dbReference>
<dbReference type="PRINTS" id="PR00101">
    <property type="entry name" value="ATCASE"/>
</dbReference>
<dbReference type="SUPFAM" id="SSF53671">
    <property type="entry name" value="Aspartate/ornithine carbamoyltransferase"/>
    <property type="match status" value="1"/>
</dbReference>
<dbReference type="PROSITE" id="PS00097">
    <property type="entry name" value="CARBAMOYLTRANSFERASE"/>
    <property type="match status" value="1"/>
</dbReference>
<keyword id="KW-0665">Pyrimidine biosynthesis</keyword>
<keyword id="KW-1185">Reference proteome</keyword>
<keyword id="KW-0808">Transferase</keyword>
<gene>
    <name evidence="1" type="primary">pyrB</name>
    <name type="ordered locus">CC_2443</name>
</gene>
<feature type="chain" id="PRO_0000113116" description="Aspartate carbamoyltransferase catalytic subunit">
    <location>
        <begin position="1"/>
        <end position="332"/>
    </location>
</feature>
<feature type="binding site" evidence="1">
    <location>
        <position position="78"/>
    </location>
    <ligand>
        <name>carbamoyl phosphate</name>
        <dbReference type="ChEBI" id="CHEBI:58228"/>
    </ligand>
</feature>
<feature type="binding site" evidence="1">
    <location>
        <position position="79"/>
    </location>
    <ligand>
        <name>carbamoyl phosphate</name>
        <dbReference type="ChEBI" id="CHEBI:58228"/>
    </ligand>
</feature>
<feature type="binding site" evidence="1">
    <location>
        <position position="106"/>
    </location>
    <ligand>
        <name>L-aspartate</name>
        <dbReference type="ChEBI" id="CHEBI:29991"/>
    </ligand>
</feature>
<feature type="binding site" evidence="1">
    <location>
        <position position="128"/>
    </location>
    <ligand>
        <name>carbamoyl phosphate</name>
        <dbReference type="ChEBI" id="CHEBI:58228"/>
    </ligand>
</feature>
<feature type="binding site" evidence="1">
    <location>
        <position position="156"/>
    </location>
    <ligand>
        <name>carbamoyl phosphate</name>
        <dbReference type="ChEBI" id="CHEBI:58228"/>
    </ligand>
</feature>
<feature type="binding site" evidence="1">
    <location>
        <position position="159"/>
    </location>
    <ligand>
        <name>carbamoyl phosphate</name>
        <dbReference type="ChEBI" id="CHEBI:58228"/>
    </ligand>
</feature>
<feature type="binding site" evidence="1">
    <location>
        <position position="189"/>
    </location>
    <ligand>
        <name>L-aspartate</name>
        <dbReference type="ChEBI" id="CHEBI:29991"/>
    </ligand>
</feature>
<feature type="binding site" evidence="1">
    <location>
        <position position="243"/>
    </location>
    <ligand>
        <name>L-aspartate</name>
        <dbReference type="ChEBI" id="CHEBI:29991"/>
    </ligand>
</feature>
<feature type="binding site" evidence="1">
    <location>
        <position position="284"/>
    </location>
    <ligand>
        <name>carbamoyl phosphate</name>
        <dbReference type="ChEBI" id="CHEBI:58228"/>
    </ligand>
</feature>
<feature type="binding site" evidence="1">
    <location>
        <position position="285"/>
    </location>
    <ligand>
        <name>carbamoyl phosphate</name>
        <dbReference type="ChEBI" id="CHEBI:58228"/>
    </ligand>
</feature>
<name>PYRB_CAUVC</name>
<evidence type="ECO:0000255" key="1">
    <source>
        <dbReference type="HAMAP-Rule" id="MF_00001"/>
    </source>
</evidence>